<evidence type="ECO:0000255" key="1">
    <source>
        <dbReference type="HAMAP-Rule" id="MF_01379"/>
    </source>
</evidence>
<evidence type="ECO:0000305" key="2"/>
<reference key="1">
    <citation type="submission" date="2006-05" db="EMBL/GenBank/DDBJ databases">
        <authorList>
            <consortium name="Genoscope"/>
        </authorList>
    </citation>
    <scope>NUCLEOTIDE SEQUENCE [LARGE SCALE GENOMIC DNA]</scope>
    <source>
        <strain>RCC307</strain>
    </source>
</reference>
<accession>A5GTY5</accession>
<gene>
    <name evidence="1 2" type="primary">psbA2</name>
    <name type="ordered locus">SynRCC307_1441</name>
</gene>
<organism>
    <name type="scientific">Synechococcus sp. (strain RCC307)</name>
    <dbReference type="NCBI Taxonomy" id="316278"/>
    <lineage>
        <taxon>Bacteria</taxon>
        <taxon>Bacillati</taxon>
        <taxon>Cyanobacteriota</taxon>
        <taxon>Cyanophyceae</taxon>
        <taxon>Synechococcales</taxon>
        <taxon>Synechococcaceae</taxon>
        <taxon>Synechococcus</taxon>
    </lineage>
</organism>
<sequence length="358" mass="39436">MSTAVRSGRVSSWESFCQWVTNTDNRIYVGWFGVLMIPCLLAATICYIIAFIAAPPVDIDGIREPVAGSFLYGNNIISGAVIPSSNAIGLHFYPIWEAATLDEWLYNGGPYQLVVFHFLIGISAYMGRQWELSYRLGMRPWICVAYAAPLSAAMVVFLIYPFGQGSFSDGMPLGISGTFNFMLVFQAEHNILMHPFHMLGVAGVFGGSLFSAMHGSLVTSSLVRETTESESQNYGYKFGQEEETYNIVAAHGYFGRLIFQYASFNNSRSLHFFLAAWPVVGIWFTSMGIATMAFNLNGFNFNQSILDAQGKVVPTWADVLNRANLGMEVMHERNAHNFPLDLATTESAPVALQAPAVG</sequence>
<keyword id="KW-0106">Calcium</keyword>
<keyword id="KW-0148">Chlorophyll</keyword>
<keyword id="KW-0157">Chromophore</keyword>
<keyword id="KW-0249">Electron transport</keyword>
<keyword id="KW-0359">Herbicide resistance</keyword>
<keyword id="KW-0408">Iron</keyword>
<keyword id="KW-0460">Magnesium</keyword>
<keyword id="KW-0464">Manganese</keyword>
<keyword id="KW-0472">Membrane</keyword>
<keyword id="KW-0479">Metal-binding</keyword>
<keyword id="KW-0560">Oxidoreductase</keyword>
<keyword id="KW-0602">Photosynthesis</keyword>
<keyword id="KW-0604">Photosystem II</keyword>
<keyword id="KW-1185">Reference proteome</keyword>
<keyword id="KW-0793">Thylakoid</keyword>
<keyword id="KW-0812">Transmembrane</keyword>
<keyword id="KW-1133">Transmembrane helix</keyword>
<keyword id="KW-0813">Transport</keyword>
<comment type="function">
    <text evidence="1">Photosystem II (PSII) is a light-driven water:plastoquinone oxidoreductase that uses light energy to abstract electrons from H(2)O, generating O(2) and a proton gradient subsequently used for ATP formation. It consists of a core antenna complex that captures photons, and an electron transfer chain that converts photonic excitation into a charge separation. The D1/D2 (PsbA/PsbD) reaction center heterodimer binds P680, the primary electron donor of PSII as well as several subsequent electron acceptors.</text>
</comment>
<comment type="catalytic activity">
    <reaction evidence="1">
        <text>2 a plastoquinone + 4 hnu + 2 H2O = 2 a plastoquinol + O2</text>
        <dbReference type="Rhea" id="RHEA:36359"/>
        <dbReference type="Rhea" id="RHEA-COMP:9561"/>
        <dbReference type="Rhea" id="RHEA-COMP:9562"/>
        <dbReference type="ChEBI" id="CHEBI:15377"/>
        <dbReference type="ChEBI" id="CHEBI:15379"/>
        <dbReference type="ChEBI" id="CHEBI:17757"/>
        <dbReference type="ChEBI" id="CHEBI:30212"/>
        <dbReference type="ChEBI" id="CHEBI:62192"/>
        <dbReference type="EC" id="1.10.3.9"/>
    </reaction>
</comment>
<comment type="cofactor">
    <text evidence="1">The D1/D2 heterodimer binds P680, chlorophylls that are the primary electron donor of PSII, and subsequent electron acceptors. It shares a non-heme iron and each subunit binds pheophytin, quinone, additional chlorophylls, carotenoids and lipids. D1 provides most of the ligands for the Mn4-Ca-O5 cluster of the oxygen-evolving complex (OEC). There is also a Cl(-1) ion associated with D1 and D2, which is required for oxygen evolution. The PSII complex binds additional chlorophylls, carotenoids and specific lipids.</text>
</comment>
<comment type="subunit">
    <text evidence="1">PSII is composed of 1 copy each of membrane proteins PsbA, PsbB, PsbC, PsbD, PsbE, PsbF, PsbH, PsbI, PsbJ, PsbK, PsbL, PsbM, PsbT, PsbX, PsbY, PsbZ, Psb30/Ycf12, peripheral proteins PsbO, CyanoQ (PsbQ), PsbU, PsbV and a large number of cofactors. It forms dimeric complexes.</text>
</comment>
<comment type="subcellular location">
    <subcellularLocation>
        <location evidence="1">Cellular thylakoid membrane</location>
        <topology evidence="1">Multi-pass membrane protein</topology>
    </subcellularLocation>
</comment>
<comment type="PTM">
    <text evidence="1">Tyr-160 forms a radical intermediate that is referred to as redox-active TyrZ, YZ or Y-Z.</text>
</comment>
<comment type="PTM">
    <text evidence="1">C-terminally processed by CtpA; processing is essential to allow assembly of the oxygen-evolving complex and thus photosynthetic growth.</text>
</comment>
<comment type="miscellaneous">
    <text evidence="1">Cyanobacteria usually contain more than 2 copies of the psbA gene.</text>
</comment>
<comment type="miscellaneous">
    <text evidence="1">2 of the reaction center chlorophylls (ChlD1 and ChlD2) are entirely coordinated by water.</text>
</comment>
<comment type="miscellaneous">
    <text evidence="1">Herbicides such as atrazine, BNT, diuron or ioxynil bind in the Q(B) binding site and block subsequent electron transfer.</text>
</comment>
<comment type="similarity">
    <text evidence="1">Belongs to the reaction center PufL/M/PsbA/D family.</text>
</comment>
<dbReference type="EC" id="1.10.3.9" evidence="1"/>
<dbReference type="EMBL" id="CT978603">
    <property type="protein sequence ID" value="CAK28344.1"/>
    <property type="molecule type" value="Genomic_DNA"/>
</dbReference>
<dbReference type="SMR" id="A5GTY5"/>
<dbReference type="STRING" id="316278.SynRCC307_1441"/>
<dbReference type="KEGG" id="syr:SynRCC307_1441"/>
<dbReference type="eggNOG" id="ENOG502Z87P">
    <property type="taxonomic scope" value="Bacteria"/>
</dbReference>
<dbReference type="HOGENOM" id="CLU_054206_1_0_3"/>
<dbReference type="OrthoDB" id="505356at2"/>
<dbReference type="Proteomes" id="UP000001115">
    <property type="component" value="Chromosome"/>
</dbReference>
<dbReference type="GO" id="GO:0009523">
    <property type="term" value="C:photosystem II"/>
    <property type="evidence" value="ECO:0007669"/>
    <property type="project" value="UniProtKB-KW"/>
</dbReference>
<dbReference type="GO" id="GO:0031676">
    <property type="term" value="C:plasma membrane-derived thylakoid membrane"/>
    <property type="evidence" value="ECO:0007669"/>
    <property type="project" value="UniProtKB-SubCell"/>
</dbReference>
<dbReference type="GO" id="GO:0016168">
    <property type="term" value="F:chlorophyll binding"/>
    <property type="evidence" value="ECO:0007669"/>
    <property type="project" value="UniProtKB-UniRule"/>
</dbReference>
<dbReference type="GO" id="GO:0045156">
    <property type="term" value="F:electron transporter, transferring electrons within the cyclic electron transport pathway of photosynthesis activity"/>
    <property type="evidence" value="ECO:0007669"/>
    <property type="project" value="InterPro"/>
</dbReference>
<dbReference type="GO" id="GO:0005506">
    <property type="term" value="F:iron ion binding"/>
    <property type="evidence" value="ECO:0007669"/>
    <property type="project" value="UniProtKB-UniRule"/>
</dbReference>
<dbReference type="GO" id="GO:0016682">
    <property type="term" value="F:oxidoreductase activity, acting on diphenols and related substances as donors, oxygen as acceptor"/>
    <property type="evidence" value="ECO:0007669"/>
    <property type="project" value="UniProtKB-UniRule"/>
</dbReference>
<dbReference type="GO" id="GO:0010242">
    <property type="term" value="F:oxygen evolving activity"/>
    <property type="evidence" value="ECO:0007669"/>
    <property type="project" value="UniProtKB-EC"/>
</dbReference>
<dbReference type="GO" id="GO:0009772">
    <property type="term" value="P:photosynthetic electron transport in photosystem II"/>
    <property type="evidence" value="ECO:0007669"/>
    <property type="project" value="InterPro"/>
</dbReference>
<dbReference type="GO" id="GO:0009635">
    <property type="term" value="P:response to herbicide"/>
    <property type="evidence" value="ECO:0007669"/>
    <property type="project" value="UniProtKB-KW"/>
</dbReference>
<dbReference type="CDD" id="cd09289">
    <property type="entry name" value="Photosystem-II_D1"/>
    <property type="match status" value="1"/>
</dbReference>
<dbReference type="FunFam" id="1.20.85.10:FF:000002">
    <property type="entry name" value="Photosystem II protein D1"/>
    <property type="match status" value="1"/>
</dbReference>
<dbReference type="Gene3D" id="1.20.85.10">
    <property type="entry name" value="Photosystem II protein D1-like"/>
    <property type="match status" value="1"/>
</dbReference>
<dbReference type="HAMAP" id="MF_01379">
    <property type="entry name" value="PSII_PsbA_D1"/>
    <property type="match status" value="1"/>
</dbReference>
<dbReference type="InterPro" id="IPR055266">
    <property type="entry name" value="D1/D2"/>
</dbReference>
<dbReference type="InterPro" id="IPR036854">
    <property type="entry name" value="Photo_II_D1/D2_sf"/>
</dbReference>
<dbReference type="InterPro" id="IPR000484">
    <property type="entry name" value="Photo_RC_L/M"/>
</dbReference>
<dbReference type="InterPro" id="IPR055265">
    <property type="entry name" value="Photo_RC_L/M_CS"/>
</dbReference>
<dbReference type="InterPro" id="IPR005867">
    <property type="entry name" value="PSII_D1"/>
</dbReference>
<dbReference type="NCBIfam" id="TIGR01151">
    <property type="entry name" value="psbA"/>
    <property type="match status" value="1"/>
</dbReference>
<dbReference type="PANTHER" id="PTHR33149:SF12">
    <property type="entry name" value="PHOTOSYSTEM II D2 PROTEIN"/>
    <property type="match status" value="1"/>
</dbReference>
<dbReference type="PANTHER" id="PTHR33149">
    <property type="entry name" value="PHOTOSYSTEM II PROTEIN D1"/>
    <property type="match status" value="1"/>
</dbReference>
<dbReference type="Pfam" id="PF00124">
    <property type="entry name" value="Photo_RC"/>
    <property type="match status" value="1"/>
</dbReference>
<dbReference type="PRINTS" id="PR00256">
    <property type="entry name" value="REACTNCENTRE"/>
</dbReference>
<dbReference type="SUPFAM" id="SSF81483">
    <property type="entry name" value="Bacterial photosystem II reaction centre, L and M subunits"/>
    <property type="match status" value="1"/>
</dbReference>
<dbReference type="PROSITE" id="PS00244">
    <property type="entry name" value="REACTION_CENTER"/>
    <property type="match status" value="1"/>
</dbReference>
<feature type="chain" id="PRO_0000316414" description="Photosystem II protein D1 2" evidence="1">
    <location>
        <begin position="1"/>
        <end position="343"/>
    </location>
</feature>
<feature type="propeptide" id="PRO_0000316415" evidence="1">
    <location>
        <begin position="344"/>
        <end position="358"/>
    </location>
</feature>
<feature type="transmembrane region" description="Helical" evidence="1">
    <location>
        <begin position="28"/>
        <end position="45"/>
    </location>
</feature>
<feature type="transmembrane region" description="Helical" evidence="1">
    <location>
        <begin position="117"/>
        <end position="132"/>
    </location>
</feature>
<feature type="transmembrane region" description="Helical" evidence="1">
    <location>
        <begin position="141"/>
        <end position="155"/>
    </location>
</feature>
<feature type="transmembrane region" description="Helical" evidence="1">
    <location>
        <begin position="196"/>
        <end position="217"/>
    </location>
</feature>
<feature type="transmembrane region" description="Helical" evidence="1">
    <location>
        <begin position="273"/>
        <end position="287"/>
    </location>
</feature>
<feature type="binding site" description="axial binding residue" evidence="1">
    <location>
        <position position="117"/>
    </location>
    <ligand>
        <name>chlorophyll a</name>
        <dbReference type="ChEBI" id="CHEBI:58416"/>
        <label>ChlzD1</label>
    </ligand>
    <ligandPart>
        <name>Mg</name>
        <dbReference type="ChEBI" id="CHEBI:25107"/>
    </ligandPart>
</feature>
<feature type="binding site" evidence="1">
    <location>
        <position position="125"/>
    </location>
    <ligand>
        <name>pheophytin a</name>
        <dbReference type="ChEBI" id="CHEBI:136840"/>
        <label>D1</label>
    </ligand>
</feature>
<feature type="binding site" evidence="1">
    <location>
        <position position="169"/>
    </location>
    <ligand>
        <name>[CaMn4O5] cluster</name>
        <dbReference type="ChEBI" id="CHEBI:189552"/>
    </ligand>
</feature>
<feature type="binding site" evidence="1">
    <location>
        <position position="188"/>
    </location>
    <ligand>
        <name>[CaMn4O5] cluster</name>
        <dbReference type="ChEBI" id="CHEBI:189552"/>
    </ligand>
</feature>
<feature type="binding site" description="axial binding residue" evidence="1">
    <location>
        <position position="197"/>
    </location>
    <ligand>
        <name>chlorophyll a</name>
        <dbReference type="ChEBI" id="CHEBI:58416"/>
        <label>PD1</label>
    </ligand>
    <ligandPart>
        <name>Mg</name>
        <dbReference type="ChEBI" id="CHEBI:25107"/>
    </ligandPart>
</feature>
<feature type="binding site" evidence="1">
    <location>
        <position position="214"/>
    </location>
    <ligand>
        <name>a quinone</name>
        <dbReference type="ChEBI" id="CHEBI:132124"/>
        <label>B</label>
    </ligand>
</feature>
<feature type="binding site" evidence="1">
    <location>
        <position position="214"/>
    </location>
    <ligand>
        <name>Fe cation</name>
        <dbReference type="ChEBI" id="CHEBI:24875"/>
        <note>ligand shared with heterodimeric partner</note>
    </ligand>
</feature>
<feature type="binding site" evidence="1">
    <location>
        <begin position="263"/>
        <end position="264"/>
    </location>
    <ligand>
        <name>a quinone</name>
        <dbReference type="ChEBI" id="CHEBI:132124"/>
        <label>B</label>
    </ligand>
</feature>
<feature type="binding site" evidence="1">
    <location>
        <position position="271"/>
    </location>
    <ligand>
        <name>Fe cation</name>
        <dbReference type="ChEBI" id="CHEBI:24875"/>
        <note>ligand shared with heterodimeric partner</note>
    </ligand>
</feature>
<feature type="binding site" evidence="1">
    <location>
        <position position="331"/>
    </location>
    <ligand>
        <name>[CaMn4O5] cluster</name>
        <dbReference type="ChEBI" id="CHEBI:189552"/>
    </ligand>
</feature>
<feature type="binding site" evidence="1">
    <location>
        <position position="332"/>
    </location>
    <ligand>
        <name>[CaMn4O5] cluster</name>
        <dbReference type="ChEBI" id="CHEBI:189552"/>
    </ligand>
</feature>
<feature type="binding site" evidence="1">
    <location>
        <position position="341"/>
    </location>
    <ligand>
        <name>[CaMn4O5] cluster</name>
        <dbReference type="ChEBI" id="CHEBI:189552"/>
    </ligand>
</feature>
<feature type="binding site" evidence="1">
    <location>
        <position position="343"/>
    </location>
    <ligand>
        <name>[CaMn4O5] cluster</name>
        <dbReference type="ChEBI" id="CHEBI:189552"/>
    </ligand>
</feature>
<feature type="site" description="Tyrosine radical intermediate" evidence="1">
    <location>
        <position position="160"/>
    </location>
</feature>
<feature type="site" description="Stabilizes free radical intermediate" evidence="1">
    <location>
        <position position="189"/>
    </location>
</feature>
<feature type="site" description="Cleavage; by CtpA" evidence="1">
    <location>
        <begin position="343"/>
        <end position="344"/>
    </location>
</feature>
<proteinExistence type="inferred from homology"/>
<name>PSBA2_SYNR3</name>
<protein>
    <recommendedName>
        <fullName evidence="1">Photosystem II protein D1 2</fullName>
        <shortName evidence="1">PSII D1 protein 2</shortName>
        <ecNumber evidence="1">1.10.3.9</ecNumber>
    </recommendedName>
    <alternativeName>
        <fullName evidence="1">Photosystem II Q(B) protein 2</fullName>
    </alternativeName>
</protein>